<reference key="1">
    <citation type="journal article" date="2005" name="Genome Res.">
        <title>Comparative and functional genomic analyses of the pathogenicity of phytopathogen Xanthomonas campestris pv. campestris.</title>
        <authorList>
            <person name="Qian W."/>
            <person name="Jia Y."/>
            <person name="Ren S.-X."/>
            <person name="He Y.-Q."/>
            <person name="Feng J.-X."/>
            <person name="Lu L.-F."/>
            <person name="Sun Q."/>
            <person name="Ying G."/>
            <person name="Tang D.-J."/>
            <person name="Tang H."/>
            <person name="Wu W."/>
            <person name="Hao P."/>
            <person name="Wang L."/>
            <person name="Jiang B.-L."/>
            <person name="Zeng S."/>
            <person name="Gu W.-Y."/>
            <person name="Lu G."/>
            <person name="Rong L."/>
            <person name="Tian Y."/>
            <person name="Yao Z."/>
            <person name="Fu G."/>
            <person name="Chen B."/>
            <person name="Fang R."/>
            <person name="Qiang B."/>
            <person name="Chen Z."/>
            <person name="Zhao G.-P."/>
            <person name="Tang J.-L."/>
            <person name="He C."/>
        </authorList>
    </citation>
    <scope>NUCLEOTIDE SEQUENCE [LARGE SCALE GENOMIC DNA]</scope>
    <source>
        <strain>8004</strain>
    </source>
</reference>
<protein>
    <recommendedName>
        <fullName evidence="1">Ribosomal RNA large subunit methyltransferase M</fullName>
        <ecNumber evidence="1">2.1.1.186</ecNumber>
    </recommendedName>
    <alternativeName>
        <fullName evidence="1">23S rRNA (cytidine2498-2'-O)-methyltransferase</fullName>
    </alternativeName>
    <alternativeName>
        <fullName evidence="1">23S rRNA 2'-O-ribose methyltransferase RlmM</fullName>
    </alternativeName>
</protein>
<keyword id="KW-0963">Cytoplasm</keyword>
<keyword id="KW-0489">Methyltransferase</keyword>
<keyword id="KW-0698">rRNA processing</keyword>
<keyword id="KW-0949">S-adenosyl-L-methionine</keyword>
<keyword id="KW-0808">Transferase</keyword>
<sequence>MSGLLCYCRQGFEPELAAELSARAAFVGIAGYARTQRNDGYVLFVCDEAAQLAARLQWRELIFARQKLVVLAELKGLDPKDRITPILAALDGQPRFGDLWVEHPDSDAGKPLAGLARSFGNALRPALRKAGLLTDKPQARLPRLHICFLDGDHALLAVADSSDSAPWPLGIPRLKLLPEAPSRSALKLDEALLTLLTPEEREQLVKPGMRAADLGAAPGGWTWVLTRQHVHVTSVDNGPLREHVLATGLVEHLRADGFHWKPAQPLDWMVCDMVEQPRRVAERMATWVREGWCRHTIFNLKLPMKKRWDETRLCLDLFEQQAEKSLTVRAKQLYHDREEITVLAMRG</sequence>
<comment type="function">
    <text evidence="1">Catalyzes the 2'-O-methylation at nucleotide C2498 in 23S rRNA.</text>
</comment>
<comment type="catalytic activity">
    <reaction evidence="1">
        <text>cytidine(2498) in 23S rRNA + S-adenosyl-L-methionine = 2'-O-methylcytidine(2498) in 23S rRNA + S-adenosyl-L-homocysteine + H(+)</text>
        <dbReference type="Rhea" id="RHEA:42788"/>
        <dbReference type="Rhea" id="RHEA-COMP:10244"/>
        <dbReference type="Rhea" id="RHEA-COMP:10245"/>
        <dbReference type="ChEBI" id="CHEBI:15378"/>
        <dbReference type="ChEBI" id="CHEBI:57856"/>
        <dbReference type="ChEBI" id="CHEBI:59789"/>
        <dbReference type="ChEBI" id="CHEBI:74495"/>
        <dbReference type="ChEBI" id="CHEBI:82748"/>
        <dbReference type="EC" id="2.1.1.186"/>
    </reaction>
</comment>
<comment type="subunit">
    <text evidence="1">Monomer.</text>
</comment>
<comment type="subcellular location">
    <subcellularLocation>
        <location evidence="1">Cytoplasm</location>
    </subcellularLocation>
</comment>
<comment type="similarity">
    <text evidence="1">Belongs to the class I-like SAM-binding methyltransferase superfamily. RNA methyltransferase RlmE family. RlmM subfamily.</text>
</comment>
<feature type="chain" id="PRO_0000070435" description="Ribosomal RNA large subunit methyltransferase M">
    <location>
        <begin position="1"/>
        <end position="347"/>
    </location>
</feature>
<feature type="active site" description="Proton acceptor" evidence="1">
    <location>
        <position position="301"/>
    </location>
</feature>
<feature type="binding site" evidence="1">
    <location>
        <position position="184"/>
    </location>
    <ligand>
        <name>S-adenosyl-L-methionine</name>
        <dbReference type="ChEBI" id="CHEBI:59789"/>
    </ligand>
</feature>
<feature type="binding site" evidence="1">
    <location>
        <begin position="217"/>
        <end position="220"/>
    </location>
    <ligand>
        <name>S-adenosyl-L-methionine</name>
        <dbReference type="ChEBI" id="CHEBI:59789"/>
    </ligand>
</feature>
<feature type="binding site" evidence="1">
    <location>
        <position position="236"/>
    </location>
    <ligand>
        <name>S-adenosyl-L-methionine</name>
        <dbReference type="ChEBI" id="CHEBI:59789"/>
    </ligand>
</feature>
<feature type="binding site" evidence="1">
    <location>
        <position position="256"/>
    </location>
    <ligand>
        <name>S-adenosyl-L-methionine</name>
        <dbReference type="ChEBI" id="CHEBI:59789"/>
    </ligand>
</feature>
<feature type="binding site" evidence="1">
    <location>
        <position position="272"/>
    </location>
    <ligand>
        <name>S-adenosyl-L-methionine</name>
        <dbReference type="ChEBI" id="CHEBI:59789"/>
    </ligand>
</feature>
<evidence type="ECO:0000255" key="1">
    <source>
        <dbReference type="HAMAP-Rule" id="MF_01551"/>
    </source>
</evidence>
<name>RLMM_XANC8</name>
<dbReference type="EC" id="2.1.1.186" evidence="1"/>
<dbReference type="EMBL" id="CP000050">
    <property type="protein sequence ID" value="AAY50458.1"/>
    <property type="molecule type" value="Genomic_DNA"/>
</dbReference>
<dbReference type="RefSeq" id="WP_011036052.1">
    <property type="nucleotide sequence ID" value="NZ_CP155948.1"/>
</dbReference>
<dbReference type="SMR" id="Q4UR65"/>
<dbReference type="KEGG" id="xcb:XC_3414"/>
<dbReference type="HOGENOM" id="CLU_043780_0_0_6"/>
<dbReference type="Proteomes" id="UP000000420">
    <property type="component" value="Chromosome"/>
</dbReference>
<dbReference type="GO" id="GO:0005737">
    <property type="term" value="C:cytoplasm"/>
    <property type="evidence" value="ECO:0007669"/>
    <property type="project" value="UniProtKB-SubCell"/>
</dbReference>
<dbReference type="GO" id="GO:0008757">
    <property type="term" value="F:S-adenosylmethionine-dependent methyltransferase activity"/>
    <property type="evidence" value="ECO:0007669"/>
    <property type="project" value="UniProtKB-UniRule"/>
</dbReference>
<dbReference type="GO" id="GO:0032259">
    <property type="term" value="P:methylation"/>
    <property type="evidence" value="ECO:0007669"/>
    <property type="project" value="UniProtKB-KW"/>
</dbReference>
<dbReference type="GO" id="GO:0006364">
    <property type="term" value="P:rRNA processing"/>
    <property type="evidence" value="ECO:0007669"/>
    <property type="project" value="UniProtKB-UniRule"/>
</dbReference>
<dbReference type="Gene3D" id="3.30.2300.20">
    <property type="match status" value="1"/>
</dbReference>
<dbReference type="Gene3D" id="3.30.70.2810">
    <property type="match status" value="1"/>
</dbReference>
<dbReference type="Gene3D" id="3.40.50.150">
    <property type="entry name" value="Vaccinia Virus protein VP39"/>
    <property type="match status" value="1"/>
</dbReference>
<dbReference type="HAMAP" id="MF_01551">
    <property type="entry name" value="23SrRNA_methyltr_M"/>
    <property type="match status" value="1"/>
</dbReference>
<dbReference type="InterPro" id="IPR040739">
    <property type="entry name" value="RlmM_FDX"/>
</dbReference>
<dbReference type="InterPro" id="IPR048646">
    <property type="entry name" value="RlmM_THUMP-like"/>
</dbReference>
<dbReference type="InterPro" id="IPR002877">
    <property type="entry name" value="RNA_MeTrfase_FtsJ_dom"/>
</dbReference>
<dbReference type="InterPro" id="IPR011224">
    <property type="entry name" value="rRNA_MeTrfase_M"/>
</dbReference>
<dbReference type="InterPro" id="IPR029063">
    <property type="entry name" value="SAM-dependent_MTases_sf"/>
</dbReference>
<dbReference type="NCBIfam" id="NF008734">
    <property type="entry name" value="PRK11760.1"/>
    <property type="match status" value="1"/>
</dbReference>
<dbReference type="PANTHER" id="PTHR37524">
    <property type="entry name" value="RIBOSOMAL RNA LARGE SUBUNIT METHYLTRANSFERASE M"/>
    <property type="match status" value="1"/>
</dbReference>
<dbReference type="PANTHER" id="PTHR37524:SF2">
    <property type="entry name" value="RIBOSOMAL RNA METHYLTRANSFERASE FTSJ DOMAIN-CONTAINING PROTEIN"/>
    <property type="match status" value="1"/>
</dbReference>
<dbReference type="Pfam" id="PF01728">
    <property type="entry name" value="FtsJ"/>
    <property type="match status" value="1"/>
</dbReference>
<dbReference type="Pfam" id="PF18125">
    <property type="entry name" value="RlmM_FDX"/>
    <property type="match status" value="1"/>
</dbReference>
<dbReference type="Pfam" id="PF21239">
    <property type="entry name" value="RLMM_N"/>
    <property type="match status" value="1"/>
</dbReference>
<dbReference type="PIRSF" id="PIRSF028774">
    <property type="entry name" value="UCP028774"/>
    <property type="match status" value="1"/>
</dbReference>
<dbReference type="SUPFAM" id="SSF53335">
    <property type="entry name" value="S-adenosyl-L-methionine-dependent methyltransferases"/>
    <property type="match status" value="1"/>
</dbReference>
<gene>
    <name evidence="1" type="primary">rlmM</name>
    <name type="ordered locus">XC_3414</name>
</gene>
<organism>
    <name type="scientific">Xanthomonas campestris pv. campestris (strain 8004)</name>
    <dbReference type="NCBI Taxonomy" id="314565"/>
    <lineage>
        <taxon>Bacteria</taxon>
        <taxon>Pseudomonadati</taxon>
        <taxon>Pseudomonadota</taxon>
        <taxon>Gammaproteobacteria</taxon>
        <taxon>Lysobacterales</taxon>
        <taxon>Lysobacteraceae</taxon>
        <taxon>Xanthomonas</taxon>
    </lineage>
</organism>
<accession>Q4UR65</accession>
<proteinExistence type="inferred from homology"/>